<accession>P0ABK6</accession>
<accession>P11096</accession>
<accession>P21546</accession>
<keyword id="KW-0021">Allosteric enzyme</keyword>
<keyword id="KW-0028">Amino-acid biosynthesis</keyword>
<keyword id="KW-0198">Cysteine biosynthesis</keyword>
<keyword id="KW-0663">Pyridoxal phosphate</keyword>
<keyword id="KW-1185">Reference proteome</keyword>
<keyword id="KW-0808">Transferase</keyword>
<protein>
    <recommendedName>
        <fullName>Cysteine synthase A</fullName>
        <shortName>CSase A</shortName>
        <ecNumber>2.5.1.47</ecNumber>
    </recommendedName>
    <alternativeName>
        <fullName>O-acetylserine (thiol)-lyase A</fullName>
        <shortName>OAS-TL A</shortName>
    </alternativeName>
    <alternativeName>
        <fullName>O-acetylserine sulfhydrylase A</fullName>
    </alternativeName>
    <alternativeName>
        <fullName>Sulfate starvation-induced protein 5</fullName>
        <shortName>SSI5</shortName>
    </alternativeName>
</protein>
<gene>
    <name type="primary">cysK</name>
    <name type="ordered locus">Z3680</name>
    <name type="ordered locus">ECs3286</name>
</gene>
<feature type="initiator methionine" description="Removed" evidence="1">
    <location>
        <position position="1"/>
    </location>
</feature>
<feature type="chain" id="PRO_0000167087" description="Cysteine synthase A">
    <location>
        <begin position="2"/>
        <end position="323"/>
    </location>
</feature>
<feature type="binding site" evidence="2">
    <location>
        <position position="8"/>
    </location>
    <ligand>
        <name>hydrogen sulfide</name>
        <dbReference type="ChEBI" id="CHEBI:29919"/>
        <note>allosteric inhibitor; ligand shared between dimeric partners</note>
    </ligand>
</feature>
<feature type="binding site" description="in other chain" evidence="2">
    <location>
        <position position="35"/>
    </location>
    <ligand>
        <name>hydrogen sulfide</name>
        <dbReference type="ChEBI" id="CHEBI:29919"/>
        <note>allosteric inhibitor; ligand shared between dimeric partners</note>
    </ligand>
</feature>
<feature type="binding site" evidence="1">
    <location>
        <position position="72"/>
    </location>
    <ligand>
        <name>pyridoxal 5'-phosphate</name>
        <dbReference type="ChEBI" id="CHEBI:597326"/>
    </ligand>
</feature>
<feature type="binding site" evidence="1">
    <location>
        <begin position="177"/>
        <end position="181"/>
    </location>
    <ligand>
        <name>pyridoxal 5'-phosphate</name>
        <dbReference type="ChEBI" id="CHEBI:597326"/>
    </ligand>
</feature>
<feature type="binding site" description="in other chain" evidence="2">
    <location>
        <position position="269"/>
    </location>
    <ligand>
        <name>hydrogen sulfide</name>
        <dbReference type="ChEBI" id="CHEBI:29919"/>
        <note>allosteric inhibitor; ligand shared between dimeric partners</note>
    </ligand>
</feature>
<feature type="binding site" evidence="1">
    <location>
        <position position="273"/>
    </location>
    <ligand>
        <name>pyridoxal 5'-phosphate</name>
        <dbReference type="ChEBI" id="CHEBI:597326"/>
    </ligand>
</feature>
<feature type="modified residue" description="N6-(pyridoxal phosphate)lysine" evidence="1">
    <location>
        <position position="42"/>
    </location>
</feature>
<sequence length="323" mass="34490">MSKIFEDNSLTIGHTPLVRLNRIGNGRILAKVESRNPSFSVKCRIGANMIWDAEKRGVLKPGVELVEPTSGNTGIALAYVAAARGYKLTLTMPETMSIERRKLLKALGANLVLTEGAKGMKGAIQKAEEIVASNPEKYLLLQQFSNPANPEIHEKTTGPEIWEDTDGQVDVFIAGVGTGGTLTGVSRYIKGTKGKTDLISVAVEPTDSPVIAQALAGEEIKPGPHKIQGIGAGFIPANLDLKLVDKVIGITNEEAISTARRLMEEEGILAGISSGAAVAAALKLQEDESFTNKNIVVILPSSGERYLSTALFADLFTEKELQQ</sequence>
<proteinExistence type="inferred from homology"/>
<comment type="catalytic activity">
    <reaction>
        <text>O-acetyl-L-serine + hydrogen sulfide = L-cysteine + acetate</text>
        <dbReference type="Rhea" id="RHEA:14829"/>
        <dbReference type="ChEBI" id="CHEBI:29919"/>
        <dbReference type="ChEBI" id="CHEBI:30089"/>
        <dbReference type="ChEBI" id="CHEBI:35235"/>
        <dbReference type="ChEBI" id="CHEBI:58340"/>
        <dbReference type="EC" id="2.5.1.47"/>
    </reaction>
</comment>
<comment type="cofactor">
    <cofactor evidence="1">
        <name>pyridoxal 5'-phosphate</name>
        <dbReference type="ChEBI" id="CHEBI:597326"/>
    </cofactor>
</comment>
<comment type="pathway">
    <text>Amino-acid biosynthesis; L-cysteine biosynthesis; L-cysteine from L-serine: step 2/2.</text>
</comment>
<comment type="subunit">
    <text evidence="1">Homodimer.</text>
</comment>
<comment type="similarity">
    <text evidence="3">Belongs to the cysteine synthase/cystathionine beta-synthase family.</text>
</comment>
<organism>
    <name type="scientific">Escherichia coli O157:H7</name>
    <dbReference type="NCBI Taxonomy" id="83334"/>
    <lineage>
        <taxon>Bacteria</taxon>
        <taxon>Pseudomonadati</taxon>
        <taxon>Pseudomonadota</taxon>
        <taxon>Gammaproteobacteria</taxon>
        <taxon>Enterobacterales</taxon>
        <taxon>Enterobacteriaceae</taxon>
        <taxon>Escherichia</taxon>
    </lineage>
</organism>
<reference key="1">
    <citation type="journal article" date="2001" name="Nature">
        <title>Genome sequence of enterohaemorrhagic Escherichia coli O157:H7.</title>
        <authorList>
            <person name="Perna N.T."/>
            <person name="Plunkett G. III"/>
            <person name="Burland V."/>
            <person name="Mau B."/>
            <person name="Glasner J.D."/>
            <person name="Rose D.J."/>
            <person name="Mayhew G.F."/>
            <person name="Evans P.S."/>
            <person name="Gregor J."/>
            <person name="Kirkpatrick H.A."/>
            <person name="Posfai G."/>
            <person name="Hackett J."/>
            <person name="Klink S."/>
            <person name="Boutin A."/>
            <person name="Shao Y."/>
            <person name="Miller L."/>
            <person name="Grotbeck E.J."/>
            <person name="Davis N.W."/>
            <person name="Lim A."/>
            <person name="Dimalanta E.T."/>
            <person name="Potamousis K."/>
            <person name="Apodaca J."/>
            <person name="Anantharaman T.S."/>
            <person name="Lin J."/>
            <person name="Yen G."/>
            <person name="Schwartz D.C."/>
            <person name="Welch R.A."/>
            <person name="Blattner F.R."/>
        </authorList>
    </citation>
    <scope>NUCLEOTIDE SEQUENCE [LARGE SCALE GENOMIC DNA]</scope>
    <source>
        <strain>O157:H7 / EDL933 / ATCC 700927 / EHEC</strain>
    </source>
</reference>
<reference key="2">
    <citation type="journal article" date="2001" name="DNA Res.">
        <title>Complete genome sequence of enterohemorrhagic Escherichia coli O157:H7 and genomic comparison with a laboratory strain K-12.</title>
        <authorList>
            <person name="Hayashi T."/>
            <person name="Makino K."/>
            <person name="Ohnishi M."/>
            <person name="Kurokawa K."/>
            <person name="Ishii K."/>
            <person name="Yokoyama K."/>
            <person name="Han C.-G."/>
            <person name="Ohtsubo E."/>
            <person name="Nakayama K."/>
            <person name="Murata T."/>
            <person name="Tanaka M."/>
            <person name="Tobe T."/>
            <person name="Iida T."/>
            <person name="Takami H."/>
            <person name="Honda T."/>
            <person name="Sasakawa C."/>
            <person name="Ogasawara N."/>
            <person name="Yasunaga T."/>
            <person name="Kuhara S."/>
            <person name="Shiba T."/>
            <person name="Hattori M."/>
            <person name="Shinagawa H."/>
        </authorList>
    </citation>
    <scope>NUCLEOTIDE SEQUENCE [LARGE SCALE GENOMIC DNA]</scope>
    <source>
        <strain>O157:H7 / Sakai / RIMD 0509952 / EHEC</strain>
    </source>
</reference>
<evidence type="ECO:0000250" key="1"/>
<evidence type="ECO:0000250" key="2">
    <source>
        <dbReference type="UniProtKB" id="P0A1E3"/>
    </source>
</evidence>
<evidence type="ECO:0000305" key="3"/>
<name>CYSK_ECO57</name>
<dbReference type="EC" id="2.5.1.47"/>
<dbReference type="EMBL" id="AE005174">
    <property type="protein sequence ID" value="AAG57533.1"/>
    <property type="molecule type" value="Genomic_DNA"/>
</dbReference>
<dbReference type="EMBL" id="BA000007">
    <property type="protein sequence ID" value="BAB36709.1"/>
    <property type="molecule type" value="Genomic_DNA"/>
</dbReference>
<dbReference type="PIR" id="A85884">
    <property type="entry name" value="A85884"/>
</dbReference>
<dbReference type="PIR" id="F91039">
    <property type="entry name" value="F91039"/>
</dbReference>
<dbReference type="RefSeq" id="NP_311313.1">
    <property type="nucleotide sequence ID" value="NC_002695.1"/>
</dbReference>
<dbReference type="RefSeq" id="WP_000034402.1">
    <property type="nucleotide sequence ID" value="NZ_VOAI01000001.1"/>
</dbReference>
<dbReference type="EMDB" id="EMD-60561"/>
<dbReference type="EMDB" id="EMD-60562"/>
<dbReference type="SMR" id="P0ABK6"/>
<dbReference type="STRING" id="155864.Z3680"/>
<dbReference type="GeneID" id="915544"/>
<dbReference type="GeneID" id="93774717"/>
<dbReference type="KEGG" id="ece:Z3680"/>
<dbReference type="KEGG" id="ecs:ECs_3286"/>
<dbReference type="PATRIC" id="fig|386585.9.peg.3433"/>
<dbReference type="eggNOG" id="COG0031">
    <property type="taxonomic scope" value="Bacteria"/>
</dbReference>
<dbReference type="HOGENOM" id="CLU_021018_1_2_6"/>
<dbReference type="OMA" id="VVTVFWD"/>
<dbReference type="SABIO-RK" id="P0ABK6"/>
<dbReference type="UniPathway" id="UPA00136">
    <property type="reaction ID" value="UER00200"/>
</dbReference>
<dbReference type="Proteomes" id="UP000000558">
    <property type="component" value="Chromosome"/>
</dbReference>
<dbReference type="Proteomes" id="UP000002519">
    <property type="component" value="Chromosome"/>
</dbReference>
<dbReference type="GO" id="GO:0004124">
    <property type="term" value="F:cysteine synthase activity"/>
    <property type="evidence" value="ECO:0007669"/>
    <property type="project" value="UniProtKB-EC"/>
</dbReference>
<dbReference type="GO" id="GO:0016829">
    <property type="term" value="F:lyase activity"/>
    <property type="evidence" value="ECO:0007669"/>
    <property type="project" value="UniProtKB-ARBA"/>
</dbReference>
<dbReference type="GO" id="GO:0006535">
    <property type="term" value="P:cysteine biosynthetic process from serine"/>
    <property type="evidence" value="ECO:0007669"/>
    <property type="project" value="InterPro"/>
</dbReference>
<dbReference type="CDD" id="cd01561">
    <property type="entry name" value="CBS_like"/>
    <property type="match status" value="1"/>
</dbReference>
<dbReference type="FunFam" id="3.40.50.1100:FF:000009">
    <property type="entry name" value="Cysteine synthase"/>
    <property type="match status" value="1"/>
</dbReference>
<dbReference type="Gene3D" id="3.40.50.1100">
    <property type="match status" value="2"/>
</dbReference>
<dbReference type="InterPro" id="IPR005856">
    <property type="entry name" value="Cys_synth"/>
</dbReference>
<dbReference type="InterPro" id="IPR050214">
    <property type="entry name" value="Cys_Synth/Cystath_Beta-Synth"/>
</dbReference>
<dbReference type="InterPro" id="IPR005859">
    <property type="entry name" value="CysK"/>
</dbReference>
<dbReference type="InterPro" id="IPR001216">
    <property type="entry name" value="P-phosphate_BS"/>
</dbReference>
<dbReference type="InterPro" id="IPR001926">
    <property type="entry name" value="TrpB-like_PALP"/>
</dbReference>
<dbReference type="InterPro" id="IPR036052">
    <property type="entry name" value="TrpB-like_PALP_sf"/>
</dbReference>
<dbReference type="NCBIfam" id="TIGR01139">
    <property type="entry name" value="cysK"/>
    <property type="match status" value="1"/>
</dbReference>
<dbReference type="NCBIfam" id="TIGR01136">
    <property type="entry name" value="cysKM"/>
    <property type="match status" value="1"/>
</dbReference>
<dbReference type="NCBIfam" id="NF007989">
    <property type="entry name" value="PRK10717.1"/>
    <property type="match status" value="1"/>
</dbReference>
<dbReference type="PANTHER" id="PTHR10314">
    <property type="entry name" value="CYSTATHIONINE BETA-SYNTHASE"/>
    <property type="match status" value="1"/>
</dbReference>
<dbReference type="Pfam" id="PF00291">
    <property type="entry name" value="PALP"/>
    <property type="match status" value="1"/>
</dbReference>
<dbReference type="SUPFAM" id="SSF53686">
    <property type="entry name" value="Tryptophan synthase beta subunit-like PLP-dependent enzymes"/>
    <property type="match status" value="1"/>
</dbReference>
<dbReference type="PROSITE" id="PS00901">
    <property type="entry name" value="CYS_SYNTHASE"/>
    <property type="match status" value="1"/>
</dbReference>